<evidence type="ECO:0000255" key="1">
    <source>
        <dbReference type="HAMAP-Rule" id="MF_00505"/>
    </source>
</evidence>
<keyword id="KW-0067">ATP-binding</keyword>
<keyword id="KW-0143">Chaperone</keyword>
<keyword id="KW-0963">Cytoplasm</keyword>
<keyword id="KW-0547">Nucleotide-binding</keyword>
<keyword id="KW-0346">Stress response</keyword>
<organism>
    <name type="scientific">Serratia proteamaculans (strain 568)</name>
    <dbReference type="NCBI Taxonomy" id="399741"/>
    <lineage>
        <taxon>Bacteria</taxon>
        <taxon>Pseudomonadati</taxon>
        <taxon>Pseudomonadota</taxon>
        <taxon>Gammaproteobacteria</taxon>
        <taxon>Enterobacterales</taxon>
        <taxon>Yersiniaceae</taxon>
        <taxon>Serratia</taxon>
    </lineage>
</organism>
<sequence length="623" mass="70744">MSMKGQETRGFQSEVKQLLHLMIHSLYSNKEIFLRELISNASDAADKLRFRALSAPELYEGDGELRVRLSFDKDQRTLTIADNGIGMNREEVIENLGTIAKSGTKAFLESIGSDQAKDSQLIGQFGVGFYSAFIVADKVTVRTRAAGAAADQGVFWESIGEGDYTIADVSKEDRGTEITLHLREGEDEYLDAWRLRSVIGKYSDHIALPVEIETKNEEDGTVTWEKINKAQALWTRSKADVTDEEYKEFYKHIAHDFTDPLSWSHNRVEGKQEYTSLLYIPAQAPWDMWNRDHKHGLKLYVQRVFIMDEAEQFMPNYLRFVRGLIDSNDLPLNVSREILQDSRVTQNLRGALTKRVLQMLEKLAKDDAEGYQKFWQQFGLVLKEGPAEDANNKETIAKLLRFASTQSESSAQTVSLEEYVGRMAEGQEKIYYITADSYAAAKSSPHLELFRKKGIEVLLLSDRIDEWMMSYLTEFDGKPFQSVSKADDALDKLADETEEQKAAEKQLEPFVDRVKTLLGDRVKDVRLTHRLTDTPAIVITDADEMSTQMAKLFAAAGQEAPAVKYIFELNPEHALVKRASDVGDNEQFAEWIDLLLDQALLAERGTLEDPNQFIRRMNKLLSA</sequence>
<reference key="1">
    <citation type="submission" date="2007-09" db="EMBL/GenBank/DDBJ databases">
        <title>Complete sequence of chromosome of Serratia proteamaculans 568.</title>
        <authorList>
            <consortium name="US DOE Joint Genome Institute"/>
            <person name="Copeland A."/>
            <person name="Lucas S."/>
            <person name="Lapidus A."/>
            <person name="Barry K."/>
            <person name="Glavina del Rio T."/>
            <person name="Dalin E."/>
            <person name="Tice H."/>
            <person name="Pitluck S."/>
            <person name="Chain P."/>
            <person name="Malfatti S."/>
            <person name="Shin M."/>
            <person name="Vergez L."/>
            <person name="Schmutz J."/>
            <person name="Larimer F."/>
            <person name="Land M."/>
            <person name="Hauser L."/>
            <person name="Kyrpides N."/>
            <person name="Kim E."/>
            <person name="Taghavi S."/>
            <person name="Newman L."/>
            <person name="Vangronsveld J."/>
            <person name="van der Lelie D."/>
            <person name="Richardson P."/>
        </authorList>
    </citation>
    <scope>NUCLEOTIDE SEQUENCE [LARGE SCALE GENOMIC DNA]</scope>
    <source>
        <strain>568</strain>
    </source>
</reference>
<accession>A8GAV2</accession>
<dbReference type="EMBL" id="CP000826">
    <property type="protein sequence ID" value="ABV40242.1"/>
    <property type="molecule type" value="Genomic_DNA"/>
</dbReference>
<dbReference type="SMR" id="A8GAV2"/>
<dbReference type="STRING" id="399741.Spro_1138"/>
<dbReference type="KEGG" id="spe:Spro_1138"/>
<dbReference type="eggNOG" id="COG0326">
    <property type="taxonomic scope" value="Bacteria"/>
</dbReference>
<dbReference type="HOGENOM" id="CLU_006684_3_0_6"/>
<dbReference type="OrthoDB" id="9802640at2"/>
<dbReference type="GO" id="GO:0005737">
    <property type="term" value="C:cytoplasm"/>
    <property type="evidence" value="ECO:0007669"/>
    <property type="project" value="UniProtKB-SubCell"/>
</dbReference>
<dbReference type="GO" id="GO:0005524">
    <property type="term" value="F:ATP binding"/>
    <property type="evidence" value="ECO:0007669"/>
    <property type="project" value="UniProtKB-UniRule"/>
</dbReference>
<dbReference type="GO" id="GO:0016887">
    <property type="term" value="F:ATP hydrolysis activity"/>
    <property type="evidence" value="ECO:0007669"/>
    <property type="project" value="InterPro"/>
</dbReference>
<dbReference type="GO" id="GO:0140662">
    <property type="term" value="F:ATP-dependent protein folding chaperone"/>
    <property type="evidence" value="ECO:0007669"/>
    <property type="project" value="InterPro"/>
</dbReference>
<dbReference type="GO" id="GO:0051082">
    <property type="term" value="F:unfolded protein binding"/>
    <property type="evidence" value="ECO:0007669"/>
    <property type="project" value="UniProtKB-UniRule"/>
</dbReference>
<dbReference type="CDD" id="cd16927">
    <property type="entry name" value="HATPase_Hsp90-like"/>
    <property type="match status" value="1"/>
</dbReference>
<dbReference type="FunFam" id="1.20.120.790:FF:000002">
    <property type="entry name" value="Molecular chaperone HtpG"/>
    <property type="match status" value="1"/>
</dbReference>
<dbReference type="FunFam" id="3.30.230.80:FF:000002">
    <property type="entry name" value="Molecular chaperone HtpG"/>
    <property type="match status" value="1"/>
</dbReference>
<dbReference type="FunFam" id="3.30.565.10:FF:000009">
    <property type="entry name" value="Molecular chaperone HtpG"/>
    <property type="match status" value="1"/>
</dbReference>
<dbReference type="FunFam" id="3.40.50.11260:FF:000002">
    <property type="entry name" value="Molecular chaperone HtpG"/>
    <property type="match status" value="1"/>
</dbReference>
<dbReference type="Gene3D" id="3.30.230.80">
    <property type="match status" value="1"/>
</dbReference>
<dbReference type="Gene3D" id="3.40.50.11260">
    <property type="match status" value="1"/>
</dbReference>
<dbReference type="Gene3D" id="1.20.120.790">
    <property type="entry name" value="Heat shock protein 90, C-terminal domain"/>
    <property type="match status" value="1"/>
</dbReference>
<dbReference type="Gene3D" id="3.30.565.10">
    <property type="entry name" value="Histidine kinase-like ATPase, C-terminal domain"/>
    <property type="match status" value="1"/>
</dbReference>
<dbReference type="HAMAP" id="MF_00505">
    <property type="entry name" value="HSP90"/>
    <property type="match status" value="1"/>
</dbReference>
<dbReference type="InterPro" id="IPR036890">
    <property type="entry name" value="HATPase_C_sf"/>
</dbReference>
<dbReference type="InterPro" id="IPR019805">
    <property type="entry name" value="Heat_shock_protein_90_CS"/>
</dbReference>
<dbReference type="InterPro" id="IPR037196">
    <property type="entry name" value="HSP90_C"/>
</dbReference>
<dbReference type="InterPro" id="IPR001404">
    <property type="entry name" value="Hsp90_fam"/>
</dbReference>
<dbReference type="InterPro" id="IPR020575">
    <property type="entry name" value="Hsp90_N"/>
</dbReference>
<dbReference type="InterPro" id="IPR020568">
    <property type="entry name" value="Ribosomal_Su5_D2-typ_SF"/>
</dbReference>
<dbReference type="NCBIfam" id="NF003555">
    <property type="entry name" value="PRK05218.1"/>
    <property type="match status" value="1"/>
</dbReference>
<dbReference type="PANTHER" id="PTHR11528">
    <property type="entry name" value="HEAT SHOCK PROTEIN 90 FAMILY MEMBER"/>
    <property type="match status" value="1"/>
</dbReference>
<dbReference type="Pfam" id="PF13589">
    <property type="entry name" value="HATPase_c_3"/>
    <property type="match status" value="1"/>
</dbReference>
<dbReference type="Pfam" id="PF00183">
    <property type="entry name" value="HSP90"/>
    <property type="match status" value="1"/>
</dbReference>
<dbReference type="PIRSF" id="PIRSF002583">
    <property type="entry name" value="Hsp90"/>
    <property type="match status" value="1"/>
</dbReference>
<dbReference type="PRINTS" id="PR00775">
    <property type="entry name" value="HEATSHOCK90"/>
</dbReference>
<dbReference type="SMART" id="SM00387">
    <property type="entry name" value="HATPase_c"/>
    <property type="match status" value="1"/>
</dbReference>
<dbReference type="SUPFAM" id="SSF55874">
    <property type="entry name" value="ATPase domain of HSP90 chaperone/DNA topoisomerase II/histidine kinase"/>
    <property type="match status" value="1"/>
</dbReference>
<dbReference type="SUPFAM" id="SSF110942">
    <property type="entry name" value="HSP90 C-terminal domain"/>
    <property type="match status" value="1"/>
</dbReference>
<dbReference type="SUPFAM" id="SSF54211">
    <property type="entry name" value="Ribosomal protein S5 domain 2-like"/>
    <property type="match status" value="1"/>
</dbReference>
<dbReference type="PROSITE" id="PS00298">
    <property type="entry name" value="HSP90"/>
    <property type="match status" value="1"/>
</dbReference>
<gene>
    <name evidence="1" type="primary">htpG</name>
    <name type="ordered locus">Spro_1138</name>
</gene>
<comment type="function">
    <text evidence="1">Molecular chaperone. Has ATPase activity.</text>
</comment>
<comment type="subunit">
    <text evidence="1">Homodimer.</text>
</comment>
<comment type="subcellular location">
    <subcellularLocation>
        <location evidence="1">Cytoplasm</location>
    </subcellularLocation>
</comment>
<comment type="similarity">
    <text evidence="1">Belongs to the heat shock protein 90 family.</text>
</comment>
<feature type="chain" id="PRO_1000060529" description="Chaperone protein HtpG">
    <location>
        <begin position="1"/>
        <end position="623"/>
    </location>
</feature>
<feature type="region of interest" description="A; substrate-binding" evidence="1">
    <location>
        <begin position="1"/>
        <end position="336"/>
    </location>
</feature>
<feature type="region of interest" description="B" evidence="1">
    <location>
        <begin position="337"/>
        <end position="551"/>
    </location>
</feature>
<feature type="region of interest" description="C" evidence="1">
    <location>
        <begin position="552"/>
        <end position="623"/>
    </location>
</feature>
<name>HTPG_SERP5</name>
<protein>
    <recommendedName>
        <fullName evidence="1">Chaperone protein HtpG</fullName>
    </recommendedName>
    <alternativeName>
        <fullName evidence="1">Heat shock protein HtpG</fullName>
    </alternativeName>
    <alternativeName>
        <fullName evidence="1">High temperature protein G</fullName>
    </alternativeName>
</protein>
<proteinExistence type="inferred from homology"/>